<gene>
    <name evidence="1" type="primary">rimP</name>
    <name type="ordered locus">Swol_0896</name>
</gene>
<organism>
    <name type="scientific">Syntrophomonas wolfei subsp. wolfei (strain DSM 2245B / Goettingen)</name>
    <dbReference type="NCBI Taxonomy" id="335541"/>
    <lineage>
        <taxon>Bacteria</taxon>
        <taxon>Bacillati</taxon>
        <taxon>Bacillota</taxon>
        <taxon>Clostridia</taxon>
        <taxon>Eubacteriales</taxon>
        <taxon>Syntrophomonadaceae</taxon>
        <taxon>Syntrophomonas</taxon>
    </lineage>
</organism>
<sequence length="139" mass="16463">MVEERLNELELELVNIEYRKENKEQFLRVFIDKDNGVDLDMCSQANRAIKESFDEQEIPYDYLEVSSPGLDRVLKKERDWERFSGYRVRIKTRKSFPGPQRITGILLGFDSENIAVELEGELLKVPREMITIIRLHPEF</sequence>
<protein>
    <recommendedName>
        <fullName evidence="1">Ribosome maturation factor RimP</fullName>
    </recommendedName>
</protein>
<evidence type="ECO:0000255" key="1">
    <source>
        <dbReference type="HAMAP-Rule" id="MF_01077"/>
    </source>
</evidence>
<comment type="function">
    <text evidence="1">Required for maturation of 30S ribosomal subunits.</text>
</comment>
<comment type="subcellular location">
    <subcellularLocation>
        <location evidence="1">Cytoplasm</location>
    </subcellularLocation>
</comment>
<comment type="similarity">
    <text evidence="1">Belongs to the RimP family.</text>
</comment>
<keyword id="KW-0963">Cytoplasm</keyword>
<keyword id="KW-1185">Reference proteome</keyword>
<keyword id="KW-0690">Ribosome biogenesis</keyword>
<dbReference type="EMBL" id="CP000448">
    <property type="protein sequence ID" value="ABI68213.1"/>
    <property type="molecule type" value="Genomic_DNA"/>
</dbReference>
<dbReference type="SMR" id="Q0AYJ1"/>
<dbReference type="STRING" id="335541.Swol_0896"/>
<dbReference type="KEGG" id="swo:Swol_0896"/>
<dbReference type="eggNOG" id="COG0779">
    <property type="taxonomic scope" value="Bacteria"/>
</dbReference>
<dbReference type="HOGENOM" id="CLU_070525_1_0_9"/>
<dbReference type="Proteomes" id="UP000001968">
    <property type="component" value="Chromosome"/>
</dbReference>
<dbReference type="GO" id="GO:0005829">
    <property type="term" value="C:cytosol"/>
    <property type="evidence" value="ECO:0007669"/>
    <property type="project" value="TreeGrafter"/>
</dbReference>
<dbReference type="GO" id="GO:0000028">
    <property type="term" value="P:ribosomal small subunit assembly"/>
    <property type="evidence" value="ECO:0007669"/>
    <property type="project" value="TreeGrafter"/>
</dbReference>
<dbReference type="GO" id="GO:0006412">
    <property type="term" value="P:translation"/>
    <property type="evidence" value="ECO:0007669"/>
    <property type="project" value="TreeGrafter"/>
</dbReference>
<dbReference type="CDD" id="cd01734">
    <property type="entry name" value="YlxS_C"/>
    <property type="match status" value="1"/>
</dbReference>
<dbReference type="Gene3D" id="2.30.30.180">
    <property type="entry name" value="Ribosome maturation factor RimP, C-terminal domain"/>
    <property type="match status" value="1"/>
</dbReference>
<dbReference type="Gene3D" id="3.30.300.70">
    <property type="entry name" value="RimP-like superfamily, N-terminal"/>
    <property type="match status" value="1"/>
</dbReference>
<dbReference type="HAMAP" id="MF_01077">
    <property type="entry name" value="RimP"/>
    <property type="match status" value="1"/>
</dbReference>
<dbReference type="InterPro" id="IPR003728">
    <property type="entry name" value="Ribosome_maturation_RimP"/>
</dbReference>
<dbReference type="InterPro" id="IPR028998">
    <property type="entry name" value="RimP_C"/>
</dbReference>
<dbReference type="InterPro" id="IPR036847">
    <property type="entry name" value="RimP_C_sf"/>
</dbReference>
<dbReference type="InterPro" id="IPR028989">
    <property type="entry name" value="RimP_N"/>
</dbReference>
<dbReference type="InterPro" id="IPR035956">
    <property type="entry name" value="RimP_N_sf"/>
</dbReference>
<dbReference type="PANTHER" id="PTHR33867">
    <property type="entry name" value="RIBOSOME MATURATION FACTOR RIMP"/>
    <property type="match status" value="1"/>
</dbReference>
<dbReference type="PANTHER" id="PTHR33867:SF1">
    <property type="entry name" value="RIBOSOME MATURATION FACTOR RIMP"/>
    <property type="match status" value="1"/>
</dbReference>
<dbReference type="Pfam" id="PF17384">
    <property type="entry name" value="DUF150_C"/>
    <property type="match status" value="1"/>
</dbReference>
<dbReference type="Pfam" id="PF02576">
    <property type="entry name" value="RimP_N"/>
    <property type="match status" value="1"/>
</dbReference>
<dbReference type="SUPFAM" id="SSF74942">
    <property type="entry name" value="YhbC-like, C-terminal domain"/>
    <property type="match status" value="1"/>
</dbReference>
<dbReference type="SUPFAM" id="SSF75420">
    <property type="entry name" value="YhbC-like, N-terminal domain"/>
    <property type="match status" value="1"/>
</dbReference>
<proteinExistence type="inferred from homology"/>
<accession>Q0AYJ1</accession>
<reference key="1">
    <citation type="journal article" date="2010" name="Environ. Microbiol.">
        <title>The genome of Syntrophomonas wolfei: new insights into syntrophic metabolism and biohydrogen production.</title>
        <authorList>
            <person name="Sieber J.R."/>
            <person name="Sims D.R."/>
            <person name="Han C."/>
            <person name="Kim E."/>
            <person name="Lykidis A."/>
            <person name="Lapidus A.L."/>
            <person name="McDonnald E."/>
            <person name="Rohlin L."/>
            <person name="Culley D.E."/>
            <person name="Gunsalus R."/>
            <person name="McInerney M.J."/>
        </authorList>
    </citation>
    <scope>NUCLEOTIDE SEQUENCE [LARGE SCALE GENOMIC DNA]</scope>
    <source>
        <strain>DSM 2245B / Goettingen</strain>
    </source>
</reference>
<feature type="chain" id="PRO_0000384795" description="Ribosome maturation factor RimP">
    <location>
        <begin position="1"/>
        <end position="139"/>
    </location>
</feature>
<name>RIMP_SYNWW</name>